<feature type="chain" id="PRO_0000318666" description="Selenide, water dikinase">
    <location>
        <begin position="1"/>
        <end position="348"/>
    </location>
</feature>
<feature type="active site" evidence="1">
    <location>
        <position position="17"/>
    </location>
</feature>
<feature type="binding site" description="in other chain" evidence="1">
    <location>
        <position position="20"/>
    </location>
    <ligand>
        <name>ATP</name>
        <dbReference type="ChEBI" id="CHEBI:30616"/>
        <note>ligand shared between dimeric partners</note>
    </ligand>
</feature>
<feature type="binding site" description="in other chain" evidence="1">
    <location>
        <begin position="48"/>
        <end position="50"/>
    </location>
    <ligand>
        <name>ATP</name>
        <dbReference type="ChEBI" id="CHEBI:30616"/>
        <note>ligand shared between dimeric partners</note>
    </ligand>
</feature>
<feature type="binding site" evidence="1">
    <location>
        <position position="51"/>
    </location>
    <ligand>
        <name>Mg(2+)</name>
        <dbReference type="ChEBI" id="CHEBI:18420"/>
    </ligand>
</feature>
<feature type="binding site" description="in other chain" evidence="1">
    <location>
        <position position="68"/>
    </location>
    <ligand>
        <name>ATP</name>
        <dbReference type="ChEBI" id="CHEBI:30616"/>
        <note>ligand shared between dimeric partners</note>
    </ligand>
</feature>
<feature type="binding site" description="in other chain" evidence="1">
    <location>
        <position position="91"/>
    </location>
    <ligand>
        <name>ATP</name>
        <dbReference type="ChEBI" id="CHEBI:30616"/>
        <note>ligand shared between dimeric partners</note>
    </ligand>
</feature>
<feature type="binding site" evidence="1">
    <location>
        <position position="91"/>
    </location>
    <ligand>
        <name>Mg(2+)</name>
        <dbReference type="ChEBI" id="CHEBI:18420"/>
    </ligand>
</feature>
<feature type="binding site" evidence="1">
    <location>
        <begin position="139"/>
        <end position="141"/>
    </location>
    <ligand>
        <name>ATP</name>
        <dbReference type="ChEBI" id="CHEBI:30616"/>
        <note>ligand shared between dimeric partners</note>
    </ligand>
</feature>
<feature type="binding site" evidence="1">
    <location>
        <position position="227"/>
    </location>
    <ligand>
        <name>Mg(2+)</name>
        <dbReference type="ChEBI" id="CHEBI:18420"/>
    </ligand>
</feature>
<feature type="site" description="Important for catalytic activity" evidence="1">
    <location>
        <position position="20"/>
    </location>
</feature>
<organism>
    <name type="scientific">Dechloromonas aromatica (strain RCB)</name>
    <dbReference type="NCBI Taxonomy" id="159087"/>
    <lineage>
        <taxon>Bacteria</taxon>
        <taxon>Pseudomonadati</taxon>
        <taxon>Pseudomonadota</taxon>
        <taxon>Betaproteobacteria</taxon>
        <taxon>Rhodocyclales</taxon>
        <taxon>Azonexaceae</taxon>
        <taxon>Dechloromonas</taxon>
    </lineage>
</organism>
<keyword id="KW-0067">ATP-binding</keyword>
<keyword id="KW-0418">Kinase</keyword>
<keyword id="KW-0460">Magnesium</keyword>
<keyword id="KW-0479">Metal-binding</keyword>
<keyword id="KW-0547">Nucleotide-binding</keyword>
<keyword id="KW-0711">Selenium</keyword>
<keyword id="KW-0808">Transferase</keyword>
<reference key="1">
    <citation type="journal article" date="2009" name="BMC Genomics">
        <title>Metabolic analysis of the soil microbe Dechloromonas aromatica str. RCB: indications of a surprisingly complex life-style and cryptic anaerobic pathways for aromatic degradation.</title>
        <authorList>
            <person name="Salinero K.K."/>
            <person name="Keller K."/>
            <person name="Feil W.S."/>
            <person name="Feil H."/>
            <person name="Trong S."/>
            <person name="Di Bartolo G."/>
            <person name="Lapidus A."/>
        </authorList>
    </citation>
    <scope>NUCLEOTIDE SEQUENCE [LARGE SCALE GENOMIC DNA]</scope>
    <source>
        <strain>RCB</strain>
    </source>
</reference>
<gene>
    <name evidence="1" type="primary">selD</name>
    <name type="ordered locus">Daro_1054</name>
</gene>
<proteinExistence type="inferred from homology"/>
<evidence type="ECO:0000255" key="1">
    <source>
        <dbReference type="HAMAP-Rule" id="MF_00625"/>
    </source>
</evidence>
<protein>
    <recommendedName>
        <fullName evidence="1">Selenide, water dikinase</fullName>
        <ecNumber evidence="1">2.7.9.3</ecNumber>
    </recommendedName>
    <alternativeName>
        <fullName evidence="1">Selenium donor protein</fullName>
    </alternativeName>
    <alternativeName>
        <fullName evidence="1">Selenophosphate synthase</fullName>
    </alternativeName>
</protein>
<dbReference type="EC" id="2.7.9.3" evidence="1"/>
<dbReference type="EMBL" id="CP000089">
    <property type="protein sequence ID" value="AAZ45810.1"/>
    <property type="molecule type" value="Genomic_DNA"/>
</dbReference>
<dbReference type="SMR" id="Q47H71"/>
<dbReference type="STRING" id="159087.Daro_1054"/>
<dbReference type="KEGG" id="dar:Daro_1054"/>
<dbReference type="eggNOG" id="COG0709">
    <property type="taxonomic scope" value="Bacteria"/>
</dbReference>
<dbReference type="HOGENOM" id="CLU_032859_0_1_4"/>
<dbReference type="OrthoDB" id="9767928at2"/>
<dbReference type="GO" id="GO:0005737">
    <property type="term" value="C:cytoplasm"/>
    <property type="evidence" value="ECO:0007669"/>
    <property type="project" value="TreeGrafter"/>
</dbReference>
<dbReference type="GO" id="GO:0005524">
    <property type="term" value="F:ATP binding"/>
    <property type="evidence" value="ECO:0007669"/>
    <property type="project" value="UniProtKB-UniRule"/>
</dbReference>
<dbReference type="GO" id="GO:0000287">
    <property type="term" value="F:magnesium ion binding"/>
    <property type="evidence" value="ECO:0007669"/>
    <property type="project" value="UniProtKB-UniRule"/>
</dbReference>
<dbReference type="GO" id="GO:0004756">
    <property type="term" value="F:selenide, water dikinase activity"/>
    <property type="evidence" value="ECO:0007669"/>
    <property type="project" value="UniProtKB-UniRule"/>
</dbReference>
<dbReference type="GO" id="GO:0016260">
    <property type="term" value="P:selenocysteine biosynthetic process"/>
    <property type="evidence" value="ECO:0007669"/>
    <property type="project" value="InterPro"/>
</dbReference>
<dbReference type="CDD" id="cd02195">
    <property type="entry name" value="SelD"/>
    <property type="match status" value="1"/>
</dbReference>
<dbReference type="FunFam" id="3.30.1330.10:FF:000003">
    <property type="entry name" value="Selenide, water dikinase"/>
    <property type="match status" value="1"/>
</dbReference>
<dbReference type="FunFam" id="3.90.650.10:FF:000004">
    <property type="entry name" value="Selenide, water dikinase"/>
    <property type="match status" value="1"/>
</dbReference>
<dbReference type="Gene3D" id="3.90.650.10">
    <property type="entry name" value="PurM-like C-terminal domain"/>
    <property type="match status" value="1"/>
</dbReference>
<dbReference type="Gene3D" id="3.30.1330.10">
    <property type="entry name" value="PurM-like, N-terminal domain"/>
    <property type="match status" value="1"/>
</dbReference>
<dbReference type="HAMAP" id="MF_00625">
    <property type="entry name" value="SelD"/>
    <property type="match status" value="1"/>
</dbReference>
<dbReference type="InterPro" id="IPR010918">
    <property type="entry name" value="PurM-like_C_dom"/>
</dbReference>
<dbReference type="InterPro" id="IPR036676">
    <property type="entry name" value="PurM-like_C_sf"/>
</dbReference>
<dbReference type="InterPro" id="IPR016188">
    <property type="entry name" value="PurM-like_N"/>
</dbReference>
<dbReference type="InterPro" id="IPR036921">
    <property type="entry name" value="PurM-like_N_sf"/>
</dbReference>
<dbReference type="InterPro" id="IPR023061">
    <property type="entry name" value="SelD_I"/>
</dbReference>
<dbReference type="InterPro" id="IPR004536">
    <property type="entry name" value="SPS/SelD"/>
</dbReference>
<dbReference type="NCBIfam" id="NF002098">
    <property type="entry name" value="PRK00943.1"/>
    <property type="match status" value="1"/>
</dbReference>
<dbReference type="NCBIfam" id="TIGR00476">
    <property type="entry name" value="selD"/>
    <property type="match status" value="1"/>
</dbReference>
<dbReference type="PANTHER" id="PTHR10256:SF0">
    <property type="entry name" value="INACTIVE SELENIDE, WATER DIKINASE-LIKE PROTEIN-RELATED"/>
    <property type="match status" value="1"/>
</dbReference>
<dbReference type="PANTHER" id="PTHR10256">
    <property type="entry name" value="SELENIDE, WATER DIKINASE"/>
    <property type="match status" value="1"/>
</dbReference>
<dbReference type="Pfam" id="PF00586">
    <property type="entry name" value="AIRS"/>
    <property type="match status" value="1"/>
</dbReference>
<dbReference type="Pfam" id="PF02769">
    <property type="entry name" value="AIRS_C"/>
    <property type="match status" value="1"/>
</dbReference>
<dbReference type="PIRSF" id="PIRSF036407">
    <property type="entry name" value="Selenphspht_syn"/>
    <property type="match status" value="1"/>
</dbReference>
<dbReference type="SUPFAM" id="SSF56042">
    <property type="entry name" value="PurM C-terminal domain-like"/>
    <property type="match status" value="1"/>
</dbReference>
<dbReference type="SUPFAM" id="SSF55326">
    <property type="entry name" value="PurM N-terminal domain-like"/>
    <property type="match status" value="1"/>
</dbReference>
<accession>Q47H71</accession>
<name>SELD_DECAR</name>
<comment type="function">
    <text evidence="1">Synthesizes selenophosphate from selenide and ATP.</text>
</comment>
<comment type="catalytic activity">
    <reaction evidence="1">
        <text>hydrogenselenide + ATP + H2O = selenophosphate + AMP + phosphate + 2 H(+)</text>
        <dbReference type="Rhea" id="RHEA:18737"/>
        <dbReference type="ChEBI" id="CHEBI:15377"/>
        <dbReference type="ChEBI" id="CHEBI:15378"/>
        <dbReference type="ChEBI" id="CHEBI:16144"/>
        <dbReference type="ChEBI" id="CHEBI:29317"/>
        <dbReference type="ChEBI" id="CHEBI:30616"/>
        <dbReference type="ChEBI" id="CHEBI:43474"/>
        <dbReference type="ChEBI" id="CHEBI:456215"/>
        <dbReference type="EC" id="2.7.9.3"/>
    </reaction>
</comment>
<comment type="cofactor">
    <cofactor evidence="1">
        <name>Mg(2+)</name>
        <dbReference type="ChEBI" id="CHEBI:18420"/>
    </cofactor>
    <text evidence="1">Binds 1 Mg(2+) ion per monomer.</text>
</comment>
<comment type="subunit">
    <text evidence="1">Homodimer.</text>
</comment>
<comment type="similarity">
    <text evidence="1">Belongs to the selenophosphate synthase 1 family. Class I subfamily.</text>
</comment>
<sequence length="348" mass="36162">MPEEKIRLTQLSHGGGCGCKIAPAVLQKILAGTTGSIIPPQLLVGTETSDDAAVYQINAQQAIVATTDFFMPIVDNPRDFGRIAATNAISDVYAMGGTPLFALALVGMPVNVLPLETIGQILQGGEDVCRAAGIPIAGGHTIDSVEPIYGLVAIGLVNPEHLKRNSGAKSGDKLILGKQLGVGIYSAALKKDQLQAKDYEAMVETTTQLNTPGPVLACLDGVHAVTDVTGFGLAGHLLEVCKGSGLRATVNYQDLPVLPKAREFMQAGLMTGASGRNWASYGEGVRIADGLEGIAQTLLTDPQTSGGLLVSCSPETVTEVLSLFLQHGFPHVSVIGEMAEGEPGIDVI</sequence>